<comment type="miscellaneous">
    <text evidence="2">Present with 1280 molecules/cell in log phase SD medium.</text>
</comment>
<evidence type="ECO:0000255" key="1">
    <source>
        <dbReference type="PROSITE-ProRule" id="PRU00126"/>
    </source>
</evidence>
<evidence type="ECO:0000269" key="2">
    <source>
    </source>
</evidence>
<proteinExistence type="evidence at protein level"/>
<reference key="1">
    <citation type="journal article" date="1996" name="Yeast">
        <title>The sequence of a 23.4 kb segment on the right arm of chromosome VII from Saccharomyces cerevisiae reveals CLB6, SPT6, RP28A and NUP57 genes, a Ty3 element and 11 new open reading frames.</title>
        <authorList>
            <person name="Hansen M."/>
            <person name="Albers M."/>
            <person name="Backes U."/>
            <person name="Coblenz A."/>
            <person name="Leuther H."/>
            <person name="Neu R."/>
            <person name="Schreer A."/>
            <person name="Schaefer B."/>
            <person name="Zimmermann M."/>
            <person name="Wolf K."/>
        </authorList>
    </citation>
    <scope>NUCLEOTIDE SEQUENCE [GENOMIC DNA]</scope>
</reference>
<reference key="2">
    <citation type="journal article" date="1997" name="Nature">
        <title>The nucleotide sequence of Saccharomyces cerevisiae chromosome VII.</title>
        <authorList>
            <person name="Tettelin H."/>
            <person name="Agostoni-Carbone M.L."/>
            <person name="Albermann K."/>
            <person name="Albers M."/>
            <person name="Arroyo J."/>
            <person name="Backes U."/>
            <person name="Barreiros T."/>
            <person name="Bertani I."/>
            <person name="Bjourson A.J."/>
            <person name="Brueckner M."/>
            <person name="Bruschi C.V."/>
            <person name="Carignani G."/>
            <person name="Castagnoli L."/>
            <person name="Cerdan E."/>
            <person name="Clemente M.L."/>
            <person name="Coblenz A."/>
            <person name="Coglievina M."/>
            <person name="Coissac E."/>
            <person name="Defoor E."/>
            <person name="Del Bino S."/>
            <person name="Delius H."/>
            <person name="Delneri D."/>
            <person name="de Wergifosse P."/>
            <person name="Dujon B."/>
            <person name="Durand P."/>
            <person name="Entian K.-D."/>
            <person name="Eraso P."/>
            <person name="Escribano V."/>
            <person name="Fabiani L."/>
            <person name="Fartmann B."/>
            <person name="Feroli F."/>
            <person name="Feuermann M."/>
            <person name="Frontali L."/>
            <person name="Garcia-Gonzalez M."/>
            <person name="Garcia-Saez M.I."/>
            <person name="Goffeau A."/>
            <person name="Guerreiro P."/>
            <person name="Hani J."/>
            <person name="Hansen M."/>
            <person name="Hebling U."/>
            <person name="Hernandez K."/>
            <person name="Heumann K."/>
            <person name="Hilger F."/>
            <person name="Hofmann B."/>
            <person name="Indge K.J."/>
            <person name="James C.M."/>
            <person name="Klima R."/>
            <person name="Koetter P."/>
            <person name="Kramer B."/>
            <person name="Kramer W."/>
            <person name="Lauquin G."/>
            <person name="Leuther H."/>
            <person name="Louis E.J."/>
            <person name="Maillier E."/>
            <person name="Marconi A."/>
            <person name="Martegani E."/>
            <person name="Mazon M.J."/>
            <person name="Mazzoni C."/>
            <person name="McReynolds A.D.K."/>
            <person name="Melchioretto P."/>
            <person name="Mewes H.-W."/>
            <person name="Minenkova O."/>
            <person name="Mueller-Auer S."/>
            <person name="Nawrocki A."/>
            <person name="Netter P."/>
            <person name="Neu R."/>
            <person name="Nombela C."/>
            <person name="Oliver S.G."/>
            <person name="Panzeri L."/>
            <person name="Paoluzi S."/>
            <person name="Plevani P."/>
            <person name="Portetelle D."/>
            <person name="Portillo F."/>
            <person name="Potier S."/>
            <person name="Purnelle B."/>
            <person name="Rieger M."/>
            <person name="Riles L."/>
            <person name="Rinaldi T."/>
            <person name="Robben J."/>
            <person name="Rodrigues-Pousada C."/>
            <person name="Rodriguez-Belmonte E."/>
            <person name="Rodriguez-Torres A.M."/>
            <person name="Rose M."/>
            <person name="Ruzzi M."/>
            <person name="Saliola M."/>
            <person name="Sanchez-Perez M."/>
            <person name="Schaefer B."/>
            <person name="Schaefer M."/>
            <person name="Scharfe M."/>
            <person name="Schmidheini T."/>
            <person name="Schreer A."/>
            <person name="Skala J."/>
            <person name="Souciet J.-L."/>
            <person name="Steensma H.Y."/>
            <person name="Talla E."/>
            <person name="Thierry A."/>
            <person name="Vandenbol M."/>
            <person name="van der Aart Q.J.M."/>
            <person name="Van Dyck L."/>
            <person name="Vanoni M."/>
            <person name="Verhasselt P."/>
            <person name="Voet M."/>
            <person name="Volckaert G."/>
            <person name="Wambutt R."/>
            <person name="Watson M.D."/>
            <person name="Weber N."/>
            <person name="Wedler E."/>
            <person name="Wedler H."/>
            <person name="Wipfli P."/>
            <person name="Wolf K."/>
            <person name="Wright L.F."/>
            <person name="Zaccaria P."/>
            <person name="Zimmermann M."/>
            <person name="Zollner A."/>
            <person name="Kleine K."/>
        </authorList>
    </citation>
    <scope>NUCLEOTIDE SEQUENCE [LARGE SCALE GENOMIC DNA]</scope>
    <source>
        <strain>ATCC 204508 / S288c</strain>
    </source>
</reference>
<reference key="3">
    <citation type="journal article" date="2014" name="G3 (Bethesda)">
        <title>The reference genome sequence of Saccharomyces cerevisiae: Then and now.</title>
        <authorList>
            <person name="Engel S.R."/>
            <person name="Dietrich F.S."/>
            <person name="Fisk D.G."/>
            <person name="Binkley G."/>
            <person name="Balakrishnan R."/>
            <person name="Costanzo M.C."/>
            <person name="Dwight S.S."/>
            <person name="Hitz B.C."/>
            <person name="Karra K."/>
            <person name="Nash R.S."/>
            <person name="Weng S."/>
            <person name="Wong E.D."/>
            <person name="Lloyd P."/>
            <person name="Skrzypek M.S."/>
            <person name="Miyasato S.R."/>
            <person name="Simison M."/>
            <person name="Cherry J.M."/>
        </authorList>
    </citation>
    <scope>GENOME REANNOTATION</scope>
    <source>
        <strain>ATCC 204508 / S288c</strain>
    </source>
</reference>
<reference key="4">
    <citation type="journal article" date="2003" name="Nature">
        <title>Global analysis of protein expression in yeast.</title>
        <authorList>
            <person name="Ghaemmaghami S."/>
            <person name="Huh W.-K."/>
            <person name="Bower K."/>
            <person name="Howson R.W."/>
            <person name="Belle A."/>
            <person name="Dephoure N."/>
            <person name="O'Shea E.K."/>
            <person name="Weissman J.S."/>
        </authorList>
    </citation>
    <scope>LEVEL OF PROTEIN EXPRESSION [LARGE SCALE ANALYSIS]</scope>
</reference>
<protein>
    <recommendedName>
        <fullName>Uncharacterized protein YGR117C</fullName>
    </recommendedName>
</protein>
<name>YG32_YEAST</name>
<feature type="chain" id="PRO_0000202817" description="Uncharacterized protein YGR117C">
    <location>
        <begin position="1"/>
        <end position="476"/>
    </location>
</feature>
<feature type="domain" description="LisH" evidence="1">
    <location>
        <begin position="7"/>
        <end position="39"/>
    </location>
</feature>
<accession>P53270</accession>
<accession>D6VUP8</accession>
<keyword id="KW-1185">Reference proteome</keyword>
<organism>
    <name type="scientific">Saccharomyces cerevisiae (strain ATCC 204508 / S288c)</name>
    <name type="common">Baker's yeast</name>
    <dbReference type="NCBI Taxonomy" id="559292"/>
    <lineage>
        <taxon>Eukaryota</taxon>
        <taxon>Fungi</taxon>
        <taxon>Dikarya</taxon>
        <taxon>Ascomycota</taxon>
        <taxon>Saccharomycotina</taxon>
        <taxon>Saccharomycetes</taxon>
        <taxon>Saccharomycetales</taxon>
        <taxon>Saccharomycetaceae</taxon>
        <taxon>Saccharomyces</taxon>
    </lineage>
</organism>
<dbReference type="EMBL" id="Z72902">
    <property type="protein sequence ID" value="CAA97125.1"/>
    <property type="molecule type" value="Genomic_DNA"/>
</dbReference>
<dbReference type="EMBL" id="BK006941">
    <property type="protein sequence ID" value="DAA08209.1"/>
    <property type="molecule type" value="Genomic_DNA"/>
</dbReference>
<dbReference type="PIR" id="S64425">
    <property type="entry name" value="S64425"/>
</dbReference>
<dbReference type="RefSeq" id="NP_011632.3">
    <property type="nucleotide sequence ID" value="NM_001181246.3"/>
</dbReference>
<dbReference type="SMR" id="P53270"/>
<dbReference type="BioGRID" id="33362">
    <property type="interactions" value="38"/>
</dbReference>
<dbReference type="DIP" id="DIP-1623N"/>
<dbReference type="FunCoup" id="P53270">
    <property type="interactions" value="48"/>
</dbReference>
<dbReference type="IntAct" id="P53270">
    <property type="interactions" value="5"/>
</dbReference>
<dbReference type="MINT" id="P53270"/>
<dbReference type="STRING" id="4932.YGR117C"/>
<dbReference type="iPTMnet" id="P53270"/>
<dbReference type="PaxDb" id="4932-YGR117C"/>
<dbReference type="PeptideAtlas" id="P53270"/>
<dbReference type="EnsemblFungi" id="YGR117C_mRNA">
    <property type="protein sequence ID" value="YGR117C"/>
    <property type="gene ID" value="YGR117C"/>
</dbReference>
<dbReference type="GeneID" id="853014"/>
<dbReference type="KEGG" id="sce:YGR117C"/>
<dbReference type="AGR" id="SGD:S000003349"/>
<dbReference type="SGD" id="S000003349">
    <property type="gene designation" value="YGR117C"/>
</dbReference>
<dbReference type="VEuPathDB" id="FungiDB:YGR117C"/>
<dbReference type="eggNOG" id="ENOG502RZPK">
    <property type="taxonomic scope" value="Eukaryota"/>
</dbReference>
<dbReference type="HOGENOM" id="CLU_049349_0_0_1"/>
<dbReference type="InParanoid" id="P53270"/>
<dbReference type="OMA" id="YMRLILV"/>
<dbReference type="OrthoDB" id="1932312at2759"/>
<dbReference type="BioCyc" id="YEAST:G3O-30824-MONOMER"/>
<dbReference type="BioGRID-ORCS" id="853014">
    <property type="hits" value="2 hits in 10 CRISPR screens"/>
</dbReference>
<dbReference type="PRO" id="PR:P53270"/>
<dbReference type="Proteomes" id="UP000002311">
    <property type="component" value="Chromosome VII"/>
</dbReference>
<dbReference type="RNAct" id="P53270">
    <property type="molecule type" value="protein"/>
</dbReference>
<dbReference type="GO" id="GO:0005737">
    <property type="term" value="C:cytoplasm"/>
    <property type="evidence" value="ECO:0007005"/>
    <property type="project" value="SGD"/>
</dbReference>
<dbReference type="GO" id="GO:0009889">
    <property type="term" value="P:regulation of biosynthetic process"/>
    <property type="evidence" value="ECO:0007669"/>
    <property type="project" value="UniProtKB-ARBA"/>
</dbReference>
<dbReference type="InterPro" id="IPR006594">
    <property type="entry name" value="LisH"/>
</dbReference>
<dbReference type="InterPro" id="IPR016520">
    <property type="entry name" value="UCP007778"/>
</dbReference>
<dbReference type="InterPro" id="IPR036322">
    <property type="entry name" value="WD40_repeat_dom_sf"/>
</dbReference>
<dbReference type="PIRSF" id="PIRSF007778">
    <property type="entry name" value="UCP007778"/>
    <property type="match status" value="1"/>
</dbReference>
<dbReference type="SMART" id="SM00667">
    <property type="entry name" value="LisH"/>
    <property type="match status" value="1"/>
</dbReference>
<dbReference type="SUPFAM" id="SSF50978">
    <property type="entry name" value="WD40 repeat-like"/>
    <property type="match status" value="1"/>
</dbReference>
<dbReference type="PROSITE" id="PS50896">
    <property type="entry name" value="LISH"/>
    <property type="match status" value="1"/>
</dbReference>
<gene>
    <name type="ordered locus">YGR117C</name>
    <name type="ORF">G6172</name>
</gene>
<sequence length="476" mass="53438">MADNSTSRFYTNLLIANYLKHNGLEDTLAAFIRETALPLSALEKSDSSNSNVGEIPLEDLQSVVEDRIYYKRRSFKDRFKTLSINDDLAPIDNAKYGIQPWNHSLKFSIDVKLNKSLPKDTLFISATFTEDSKYILLSSATGYLVIYDIEKATSKSFKINEKVKSIVKLYGPIGSSGYQYVCPMNGSFYLLNNDFELVNNAVWKIHARMITHIKICNVTESSWFVITSGMDNFLRLSLLEIKNGNTFLTKLSEIKLASNCTSLNVIANGDGNGQNSFSVFLTRAEYTHIACYSIIDAKNLVHSYNIALNNAEFSTYAFNIRDVMAVDYVHSNTKDTIGLSPSTMLVVATSHKPYMRLILVEIPMNTGHPKAMKLDKVQTYYDKILRNFATEIYQDDFSLPILGKLESSNGVLVGNDEGIYSVDLMTGDSRILNIPGEANSLHDRIKCMDISKDQMRMVAGTSTKSIYILNVIRNAQ</sequence>